<dbReference type="EMBL" id="CP000685">
    <property type="protein sequence ID" value="ABQ03437.1"/>
    <property type="molecule type" value="Genomic_DNA"/>
</dbReference>
<dbReference type="RefSeq" id="WP_007136570.1">
    <property type="nucleotide sequence ID" value="NZ_MUGZ01000005.1"/>
</dbReference>
<dbReference type="SMR" id="A5FMY5"/>
<dbReference type="STRING" id="376686.Fjoh_0401"/>
<dbReference type="KEGG" id="fjo:Fjoh_0401"/>
<dbReference type="eggNOG" id="COG0048">
    <property type="taxonomic scope" value="Bacteria"/>
</dbReference>
<dbReference type="HOGENOM" id="CLU_104295_1_2_10"/>
<dbReference type="OrthoDB" id="9802366at2"/>
<dbReference type="Proteomes" id="UP000006694">
    <property type="component" value="Chromosome"/>
</dbReference>
<dbReference type="GO" id="GO:0015935">
    <property type="term" value="C:small ribosomal subunit"/>
    <property type="evidence" value="ECO:0007669"/>
    <property type="project" value="InterPro"/>
</dbReference>
<dbReference type="GO" id="GO:0019843">
    <property type="term" value="F:rRNA binding"/>
    <property type="evidence" value="ECO:0007669"/>
    <property type="project" value="UniProtKB-UniRule"/>
</dbReference>
<dbReference type="GO" id="GO:0003735">
    <property type="term" value="F:structural constituent of ribosome"/>
    <property type="evidence" value="ECO:0007669"/>
    <property type="project" value="InterPro"/>
</dbReference>
<dbReference type="GO" id="GO:0000049">
    <property type="term" value="F:tRNA binding"/>
    <property type="evidence" value="ECO:0007669"/>
    <property type="project" value="UniProtKB-UniRule"/>
</dbReference>
<dbReference type="GO" id="GO:0006412">
    <property type="term" value="P:translation"/>
    <property type="evidence" value="ECO:0007669"/>
    <property type="project" value="UniProtKB-UniRule"/>
</dbReference>
<dbReference type="CDD" id="cd03368">
    <property type="entry name" value="Ribosomal_S12"/>
    <property type="match status" value="1"/>
</dbReference>
<dbReference type="FunFam" id="2.40.50.140:FF:000001">
    <property type="entry name" value="30S ribosomal protein S12"/>
    <property type="match status" value="1"/>
</dbReference>
<dbReference type="Gene3D" id="2.40.50.140">
    <property type="entry name" value="Nucleic acid-binding proteins"/>
    <property type="match status" value="1"/>
</dbReference>
<dbReference type="HAMAP" id="MF_00403_B">
    <property type="entry name" value="Ribosomal_uS12_B"/>
    <property type="match status" value="1"/>
</dbReference>
<dbReference type="InterPro" id="IPR012340">
    <property type="entry name" value="NA-bd_OB-fold"/>
</dbReference>
<dbReference type="InterPro" id="IPR006032">
    <property type="entry name" value="Ribosomal_uS12"/>
</dbReference>
<dbReference type="InterPro" id="IPR005679">
    <property type="entry name" value="Ribosomal_uS12_bac"/>
</dbReference>
<dbReference type="NCBIfam" id="TIGR00981">
    <property type="entry name" value="rpsL_bact"/>
    <property type="match status" value="1"/>
</dbReference>
<dbReference type="PANTHER" id="PTHR11652">
    <property type="entry name" value="30S RIBOSOMAL PROTEIN S12 FAMILY MEMBER"/>
    <property type="match status" value="1"/>
</dbReference>
<dbReference type="Pfam" id="PF00164">
    <property type="entry name" value="Ribosom_S12_S23"/>
    <property type="match status" value="1"/>
</dbReference>
<dbReference type="PIRSF" id="PIRSF002133">
    <property type="entry name" value="Ribosomal_S12/S23"/>
    <property type="match status" value="1"/>
</dbReference>
<dbReference type="PRINTS" id="PR01034">
    <property type="entry name" value="RIBOSOMALS12"/>
</dbReference>
<dbReference type="SUPFAM" id="SSF50249">
    <property type="entry name" value="Nucleic acid-binding proteins"/>
    <property type="match status" value="1"/>
</dbReference>
<dbReference type="PROSITE" id="PS00055">
    <property type="entry name" value="RIBOSOMAL_S12"/>
    <property type="match status" value="1"/>
</dbReference>
<gene>
    <name evidence="2" type="primary">rpsL</name>
    <name type="ordered locus">Fjoh_0401</name>
</gene>
<evidence type="ECO:0000250" key="1"/>
<evidence type="ECO:0000255" key="2">
    <source>
        <dbReference type="HAMAP-Rule" id="MF_00403"/>
    </source>
</evidence>
<evidence type="ECO:0000256" key="3">
    <source>
        <dbReference type="SAM" id="MobiDB-lite"/>
    </source>
</evidence>
<evidence type="ECO:0000305" key="4"/>
<reference key="1">
    <citation type="journal article" date="2009" name="Appl. Environ. Microbiol.">
        <title>Novel features of the polysaccharide-digesting gliding bacterium Flavobacterium johnsoniae as revealed by genome sequence analysis.</title>
        <authorList>
            <person name="McBride M.J."/>
            <person name="Xie G."/>
            <person name="Martens E.C."/>
            <person name="Lapidus A."/>
            <person name="Henrissat B."/>
            <person name="Rhodes R.G."/>
            <person name="Goltsman E."/>
            <person name="Wang W."/>
            <person name="Xu J."/>
            <person name="Hunnicutt D.W."/>
            <person name="Staroscik A.M."/>
            <person name="Hoover T.R."/>
            <person name="Cheng Y.Q."/>
            <person name="Stein J.L."/>
        </authorList>
    </citation>
    <scope>NUCLEOTIDE SEQUENCE [LARGE SCALE GENOMIC DNA]</scope>
    <source>
        <strain>ATCC 17061 / DSM 2064 / JCM 8514 / BCRC 14874 / CCUG 350202 / NBRC 14942 / NCIMB 11054 / UW101</strain>
    </source>
</reference>
<feature type="chain" id="PRO_1000080395" description="Small ribosomal subunit protein uS12">
    <location>
        <begin position="1"/>
        <end position="127"/>
    </location>
</feature>
<feature type="region of interest" description="Disordered" evidence="3">
    <location>
        <begin position="101"/>
        <end position="127"/>
    </location>
</feature>
<feature type="compositionally biased region" description="Basic residues" evidence="3">
    <location>
        <begin position="111"/>
        <end position="127"/>
    </location>
</feature>
<feature type="modified residue" description="3-methylthioaspartic acid" evidence="1">
    <location>
        <position position="89"/>
    </location>
</feature>
<protein>
    <recommendedName>
        <fullName evidence="2">Small ribosomal subunit protein uS12</fullName>
    </recommendedName>
    <alternativeName>
        <fullName evidence="4">30S ribosomal protein S12</fullName>
    </alternativeName>
</protein>
<keyword id="KW-0488">Methylation</keyword>
<keyword id="KW-0687">Ribonucleoprotein</keyword>
<keyword id="KW-0689">Ribosomal protein</keyword>
<keyword id="KW-0694">RNA-binding</keyword>
<keyword id="KW-0699">rRNA-binding</keyword>
<keyword id="KW-0820">tRNA-binding</keyword>
<organism>
    <name type="scientific">Flavobacterium johnsoniae (strain ATCC 17061 / DSM 2064 / JCM 8514 / BCRC 14874 / CCUG 350202 / NBRC 14942 / NCIMB 11054 / UW101)</name>
    <name type="common">Cytophaga johnsonae</name>
    <dbReference type="NCBI Taxonomy" id="376686"/>
    <lineage>
        <taxon>Bacteria</taxon>
        <taxon>Pseudomonadati</taxon>
        <taxon>Bacteroidota</taxon>
        <taxon>Flavobacteriia</taxon>
        <taxon>Flavobacteriales</taxon>
        <taxon>Flavobacteriaceae</taxon>
        <taxon>Flavobacterium</taxon>
    </lineage>
</organism>
<name>RS12_FLAJ1</name>
<proteinExistence type="inferred from homology"/>
<comment type="function">
    <text evidence="2">With S4 and S5 plays an important role in translational accuracy.</text>
</comment>
<comment type="function">
    <text evidence="2">Interacts with and stabilizes bases of the 16S rRNA that are involved in tRNA selection in the A site and with the mRNA backbone. Located at the interface of the 30S and 50S subunits, it traverses the body of the 30S subunit contacting proteins on the other side and probably holding the rRNA structure together. The combined cluster of proteins S8, S12 and S17 appears to hold together the shoulder and platform of the 30S subunit.</text>
</comment>
<comment type="subunit">
    <text evidence="2">Part of the 30S ribosomal subunit. Contacts proteins S8 and S17. May interact with IF1 in the 30S initiation complex.</text>
</comment>
<comment type="similarity">
    <text evidence="2">Belongs to the universal ribosomal protein uS12 family.</text>
</comment>
<accession>A5FMY5</accession>
<sequence>MPTIQQLVRTGRTQITKKSKSVALDSCPQRRGVCTRVYTTTPKKPNSAMRKVARVRLTNGNEVNAYIPGEGHNLQEHSIVLVRGGRVKDLPGVRYHIVRGALDTSGVAGRTQRRSKYGAKRPKEAKK</sequence>